<keyword id="KW-0025">Alternative splicing</keyword>
<keyword id="KW-0175">Coiled coil</keyword>
<keyword id="KW-0472">Membrane</keyword>
<keyword id="KW-0479">Metal-binding</keyword>
<keyword id="KW-0597">Phosphoprotein</keyword>
<keyword id="KW-1185">Reference proteome</keyword>
<keyword id="KW-0808">Transferase</keyword>
<keyword id="KW-0812">Transmembrane</keyword>
<keyword id="KW-1133">Transmembrane helix</keyword>
<keyword id="KW-0833">Ubl conjugation pathway</keyword>
<keyword id="KW-0862">Zinc</keyword>
<keyword id="KW-0863">Zinc-finger</keyword>
<comment type="function">
    <text evidence="1 5 6 7">E3 ubiquitin-protein ligase which is a component of the N-end rule pathway (PubMed:17462990). Does not bind to proteins bearing specific N-terminal residues that are destabilizing according to the N-end rule, leading to their ubiquitination and subsequent degradation (PubMed:17462990). May play a role in Shh signaling by mediating the ubiquitination of Kif7 (PubMed:27195754). May be important for MYH9 function in certain tissues, possibly by regulating the ubiquitination of MYH9 and consequently affecting its interaction with MYO7A (PubMed:27331610).</text>
</comment>
<comment type="catalytic activity">
    <reaction>
        <text>S-ubiquitinyl-[E2 ubiquitin-conjugating enzyme]-L-cysteine + [acceptor protein]-L-lysine = [E2 ubiquitin-conjugating enzyme]-L-cysteine + N(6)-ubiquitinyl-[acceptor protein]-L-lysine.</text>
        <dbReference type="EC" id="2.3.2.27"/>
    </reaction>
</comment>
<comment type="pathway">
    <text>Protein modification; protein ubiquitination.</text>
</comment>
<comment type="subunit">
    <text evidence="5">Interacts with UBE2A and UBE2B.</text>
</comment>
<comment type="subcellular location">
    <subcellularLocation>
        <location evidence="10">Membrane</location>
        <topology evidence="10">Multi-pass membrane protein</topology>
    </subcellularLocation>
</comment>
<comment type="alternative products">
    <event type="alternative splicing"/>
    <isoform>
        <id>Q5U430-1</id>
        <name>1</name>
        <sequence type="displayed"/>
    </isoform>
    <isoform>
        <id>Q5U430-2</id>
        <name>2</name>
        <sequence type="described" ref="VSP_023143"/>
    </isoform>
    <isoform>
        <id>Q5U430-3</id>
        <name>3</name>
        <sequence type="described" ref="VSP_023144 VSP_023145"/>
    </isoform>
</comment>
<comment type="tissue specificity">
    <text evidence="5">Expressed in numerous cells of the smell, touch, vision, hearing and taste senses. Expressed in cells of the olfactory pathway, including the olfactory cell layer of the main olfactory epithelium (MOE), a mitral neuron cell layer of the olfactory bulb (OB), and a pyramidal cell layer of the piriform cortex of the olfactory cortex (OC). Expressed in the vomeronasal sensory epithelium of the vomeronasal organ (VNO) and the mitral cells of the accessory olfactory bulb. Expressed in tactile tissues, including the dorsal root ganglion, trigeminal ganglion and follicle-sinus complexes. Expressed in cells between hair follicle and sinus and also in the region of the rete ridge collar. Expressed in taste buds of the fungiform, circumvallate, and foliate papillae. Expressed in the spiral ganglion, the organ of Corti of the cochlea in the inner ear, in the sensory epithelium of macula and vestibular ganglion of the balancing system (at protein level). Expressed in the liver and skeletal muscle.</text>
</comment>
<comment type="disruption phenotype">
    <text evidence="5">Knockout mice for Ubr3 in a B6-enriched background exhibited neonatal lethality associated with suckling impairment, but can be partially rescued if the litter size is reduced. Survived adult knockout mice for Ubr3 had female-specific behavioral anosmia (decreased sense of smell).</text>
</comment>
<comment type="similarity">
    <text evidence="10">Belongs to the E3 ubiquitin-protein ligase UBR1-like family.</text>
</comment>
<accession>Q5U430</accession>
<accession>A2AV04</accession>
<accession>A6MFP4</accession>
<accession>Q69Z32</accession>
<sequence length="1889" mass="212757">MAAAAAAAAVGDPQPPQPEAPAQGLALDKAATAAHLKAALSRPDNRAGAEELQALLERVLNAERPLAGAAGGEEAAGGGGGGPGEAEEDALEWCKCLLAGGGGYEEFCAAVRAYDPAALCGLVWTANFVAYRCRTCGISPCMSLCAECFHQGDHTGHDFNMFRSQAGGACDCGDSNVMRESGFCRRHQIKSSSNIPCVPKDLLMMSEFVLPRFIFCLIQYLREGYNEPAADAPSEKDLNKVLQLLEPQISFLEDLTKMGGAMRSVLTQVLTNQQNYKDLTAGLGENACAKKSHEKYLIALKSSGLTYPEDKLVYGVQEPAAGTSTLAAQGFAGATGTLGQIDSSDEEDQDGSQGLGKRKRVKLSSGTKDQSIMDVLKHKSFLEELLFWTIKYEFPQKMVTFLLNMLPDQEYKVAFTKTFVQHYAFIMKTLKKSHESDTMSNRIVHISVQLFSNEELARQVTEECQLLDIMVTVLLYMMESCLIKSELQDEENSLHVVVNCGEALLKNNTYWPLVSDFINILSHQSVAQRFLEDHGLLVTWMNFVSFFQGMNLNKRELNEHVEFESQTYYAAFAAELEACAQPMWGLLSHCKVRETQEYTRNVVRYCLEALQDWFDAINFVDEPAPNQVTFHLPLHRYYAMFLSKAVKCQELDLDSLLPDQEMLMKLMIHPLQIQASLAEIHSNMWVRNGLQIKGQAMTYVQSHFCNSMIDPDIYLLQVCASRLDPDYFISSVFERFKVVDLLTMASQHHNMVLDVEHERSMLEGALTFLVILLSLRLHLGMSDDDILRAEMVAQLCMNDRTHSSLLDLIPENPNPKSGIIPGSYSFESVLSAVADFRAPIFEPGGSMQQGMYTPKAEVWDQEFDPVMVILRTVYRRDVQSAMDRYTAFLKQSGKFPGNPWPPYKKRTSLHPSYKGLMRLLHCKTLHIVLFTLLYKILMDHQNLSEHVLCMVLYLIELGLENSADDDSEEEVSMGGPERCHDSWFPGSNLVSNMRHFINYVRVRVPETAPELKRDPLASTSSDALDSLQNSGTAQVFSLVAERRKKFQEIINRSNSEANQVVRPKIPSKWSAPGSSPQLTTAILEIKESILSLLIKLHHKLSGKQNSYYPPWLDDIEVLIQPEIPKYNHGDGITAVERILLKAAVQSRMNKRIIEEICRKVTPPVPPKKITAAEKKTLDKEERRQKARERQQKLLAEFASRQKSFMETAMDVDSPENDIPMEITTAEPQVSEAVYDCVICGQSGPSSEDRPTGLVVLLQASSVLGQCRDNAEPKKLPIAEEEQIYPWDTCAAVHDVRLSLLQRYFKDSSCLLAVSIGWEGGVYVQTCGHTLHIDCHKSYMESLRNDQVLQGFSVDKGEFTCPLCRQFANSVLPCYPGSNVENNLWQRPCNKSTQDLIKEVEELQGRPGAFPSETNLSKEMESVMKDIKNTTQKKYRDYSKTPGSPDNEFLFMYSVARTNLELELIHRGGSLCSGGPSTAGKRSCLNQLFHVLALHMRLYTIDSEYNPWKKLTQLVEDMNSQVGNEDQQPEVPILYHDVTSLLLIQILMMPQPLRKEHFTCIVKVLFTLLYTQALAALSVKGTEEDRSAWKHAGALRKDTCDAEKCYEVLLSFVISELSKGKLYYEEGAQECAMVSPIAWSPESMERYIQDFCLPFLRVSSLLQHHLFGEDLPSCQEEEEFSVLASCLGLLPTFYQTDHPFISASCLDWPVAAFDIITQWCFEITSFTERHAEQGKALLIQESRWKLPHLLQLPENYNTIFQYYHRKTCSVCTKVPKDPAVCLVCGTFVCLKGLCCKQQSYCECVLHSQNCGAGTGIFLLINASVIIIIRGHRFCLWGSVYLDAHGEEDRDLRRGKPLYICEERYRVLEQQWVSHTFDHINKRWGPHYNGL</sequence>
<name>UBR3_MOUSE</name>
<proteinExistence type="evidence at protein level"/>
<feature type="chain" id="PRO_0000278185" description="E3 ubiquitin-protein ligase UBR3">
    <location>
        <begin position="1"/>
        <end position="1889"/>
    </location>
</feature>
<feature type="transmembrane region" description="Helical" evidence="2">
    <location>
        <begin position="761"/>
        <end position="781"/>
    </location>
</feature>
<feature type="transmembrane region" description="Helical" evidence="2">
    <location>
        <begin position="919"/>
        <end position="939"/>
    </location>
</feature>
<feature type="transmembrane region" description="Helical" evidence="2">
    <location>
        <begin position="1807"/>
        <end position="1827"/>
    </location>
</feature>
<feature type="zinc finger region" description="UBR-type" evidence="3">
    <location>
        <begin position="118"/>
        <end position="189"/>
    </location>
</feature>
<feature type="zinc finger region" description="RING-type; degenerate">
    <location>
        <begin position="1306"/>
        <end position="1364"/>
    </location>
</feature>
<feature type="region of interest" description="Disordered" evidence="4">
    <location>
        <begin position="1"/>
        <end position="27"/>
    </location>
</feature>
<feature type="region of interest" description="Disordered" evidence="4">
    <location>
        <begin position="338"/>
        <end position="362"/>
    </location>
</feature>
<feature type="coiled-coil region" evidence="2">
    <location>
        <begin position="1167"/>
        <end position="1199"/>
    </location>
</feature>
<feature type="modified residue" description="Phosphoserine" evidence="11">
    <location>
        <position position="343"/>
    </location>
</feature>
<feature type="modified residue" description="Phosphoserine" evidence="11">
    <location>
        <position position="344"/>
    </location>
</feature>
<feature type="modified residue" description="Phosphoserine" evidence="11">
    <location>
        <position position="1199"/>
    </location>
</feature>
<feature type="splice variant" id="VSP_023143" description="In isoform 2." evidence="9">
    <location>
        <begin position="1"/>
        <end position="1494"/>
    </location>
</feature>
<feature type="splice variant" id="VSP_023144" description="In isoform 3." evidence="8">
    <original>ALLIQESRWKLPHLLQLPENYNTIFQYYHRKTCSV</original>
    <variation>VWREVGGNVLLGRGLMEEVKSRSLVAAGFKLIKLK</variation>
    <location>
        <begin position="1735"/>
        <end position="1769"/>
    </location>
</feature>
<feature type="splice variant" id="VSP_023145" description="In isoform 3." evidence="8">
    <location>
        <begin position="1770"/>
        <end position="1889"/>
    </location>
</feature>
<feature type="sequence conflict" description="In Ref. 1; ABK59000." evidence="10" ref="1">
    <original>N</original>
    <variation>S</variation>
    <location>
        <position position="1269"/>
    </location>
</feature>
<evidence type="ECO:0000250" key="1">
    <source>
        <dbReference type="UniProtKB" id="Q6ZT12"/>
    </source>
</evidence>
<evidence type="ECO:0000255" key="2"/>
<evidence type="ECO:0000255" key="3">
    <source>
        <dbReference type="PROSITE-ProRule" id="PRU00508"/>
    </source>
</evidence>
<evidence type="ECO:0000256" key="4">
    <source>
        <dbReference type="SAM" id="MobiDB-lite"/>
    </source>
</evidence>
<evidence type="ECO:0000269" key="5">
    <source>
    </source>
</evidence>
<evidence type="ECO:0000269" key="6">
    <source>
    </source>
</evidence>
<evidence type="ECO:0000269" key="7">
    <source>
    </source>
</evidence>
<evidence type="ECO:0000303" key="8">
    <source>
    </source>
</evidence>
<evidence type="ECO:0000303" key="9">
    <source>
    </source>
</evidence>
<evidence type="ECO:0000305" key="10"/>
<evidence type="ECO:0007744" key="11">
    <source>
    </source>
</evidence>
<dbReference type="EC" id="2.3.2.27"/>
<dbReference type="EMBL" id="DQ924536">
    <property type="protein sequence ID" value="ABK59000.1"/>
    <property type="molecule type" value="mRNA"/>
</dbReference>
<dbReference type="EMBL" id="AL929249">
    <property type="status" value="NOT_ANNOTATED_CDS"/>
    <property type="molecule type" value="Genomic_DNA"/>
</dbReference>
<dbReference type="EMBL" id="BC085286">
    <property type="protein sequence ID" value="AAH85286.1"/>
    <property type="molecule type" value="mRNA"/>
</dbReference>
<dbReference type="EMBL" id="AK173334">
    <property type="protein sequence ID" value="BAD32612.1"/>
    <property type="molecule type" value="mRNA"/>
</dbReference>
<dbReference type="CCDS" id="CCDS16104.2">
    <molecule id="Q5U430-1"/>
</dbReference>
<dbReference type="RefSeq" id="NP_808451.2">
    <molecule id="Q5U430-1"/>
    <property type="nucleotide sequence ID" value="NM_177783.6"/>
</dbReference>
<dbReference type="SMR" id="Q5U430"/>
<dbReference type="BioGRID" id="213054">
    <property type="interactions" value="2"/>
</dbReference>
<dbReference type="FunCoup" id="Q5U430">
    <property type="interactions" value="1008"/>
</dbReference>
<dbReference type="STRING" id="10090.ENSMUSP00000060159"/>
<dbReference type="GlyGen" id="Q5U430">
    <property type="glycosylation" value="1 site, 1 N-linked glycan (1 site)"/>
</dbReference>
<dbReference type="iPTMnet" id="Q5U430"/>
<dbReference type="PhosphoSitePlus" id="Q5U430"/>
<dbReference type="PaxDb" id="10090-ENSMUSP00000060159"/>
<dbReference type="PeptideAtlas" id="Q5U430"/>
<dbReference type="ProteomicsDB" id="300075">
    <molecule id="Q5U430-1"/>
</dbReference>
<dbReference type="ProteomicsDB" id="300076">
    <molecule id="Q5U430-2"/>
</dbReference>
<dbReference type="ProteomicsDB" id="300077">
    <molecule id="Q5U430-3"/>
</dbReference>
<dbReference type="Pumba" id="Q5U430"/>
<dbReference type="Antibodypedia" id="33822">
    <property type="antibodies" value="41 antibodies from 14 providers"/>
</dbReference>
<dbReference type="DNASU" id="68795"/>
<dbReference type="Ensembl" id="ENSMUST00000055758.16">
    <molecule id="Q5U430-1"/>
    <property type="protein sequence ID" value="ENSMUSP00000060159.10"/>
    <property type="gene ID" value="ENSMUSG00000044308.19"/>
</dbReference>
<dbReference type="GeneID" id="68795"/>
<dbReference type="KEGG" id="mmu:68795"/>
<dbReference type="UCSC" id="uc008jzb.3">
    <molecule id="Q5U430-1"/>
    <property type="organism name" value="mouse"/>
</dbReference>
<dbReference type="UCSC" id="uc008jzc.2">
    <molecule id="Q5U430-2"/>
    <property type="organism name" value="mouse"/>
</dbReference>
<dbReference type="AGR" id="MGI:1861100"/>
<dbReference type="CTD" id="130507"/>
<dbReference type="MGI" id="MGI:1861100">
    <property type="gene designation" value="Ubr3"/>
</dbReference>
<dbReference type="VEuPathDB" id="HostDB:ENSMUSG00000044308"/>
<dbReference type="eggNOG" id="KOG1139">
    <property type="taxonomic scope" value="Eukaryota"/>
</dbReference>
<dbReference type="GeneTree" id="ENSGT00950000183075"/>
<dbReference type="InParanoid" id="Q5U430"/>
<dbReference type="PhylomeDB" id="Q5U430"/>
<dbReference type="TreeFam" id="TF323875"/>
<dbReference type="UniPathway" id="UPA00143"/>
<dbReference type="BioGRID-ORCS" id="68795">
    <property type="hits" value="4 hits in 77 CRISPR screens"/>
</dbReference>
<dbReference type="ChiTaRS" id="Ubr3">
    <property type="organism name" value="mouse"/>
</dbReference>
<dbReference type="PRO" id="PR:Q5U430"/>
<dbReference type="Proteomes" id="UP000000589">
    <property type="component" value="Chromosome 2"/>
</dbReference>
<dbReference type="RNAct" id="Q5U430">
    <property type="molecule type" value="protein"/>
</dbReference>
<dbReference type="Bgee" id="ENSMUSG00000044308">
    <property type="expression patterns" value="Expressed in vastus lateralis and 254 other cell types or tissues"/>
</dbReference>
<dbReference type="ExpressionAtlas" id="Q5U430">
    <property type="expression patterns" value="baseline and differential"/>
</dbReference>
<dbReference type="GO" id="GO:0016020">
    <property type="term" value="C:membrane"/>
    <property type="evidence" value="ECO:0007669"/>
    <property type="project" value="UniProtKB-SubCell"/>
</dbReference>
<dbReference type="GO" id="GO:0061630">
    <property type="term" value="F:ubiquitin protein ligase activity"/>
    <property type="evidence" value="ECO:0000314"/>
    <property type="project" value="MGI"/>
</dbReference>
<dbReference type="GO" id="GO:0004842">
    <property type="term" value="F:ubiquitin-protein transferase activity"/>
    <property type="evidence" value="ECO:0000314"/>
    <property type="project" value="UniProtKB"/>
</dbReference>
<dbReference type="GO" id="GO:0008270">
    <property type="term" value="F:zinc ion binding"/>
    <property type="evidence" value="ECO:0007669"/>
    <property type="project" value="UniProtKB-KW"/>
</dbReference>
<dbReference type="GO" id="GO:0009792">
    <property type="term" value="P:embryo development ending in birth or egg hatching"/>
    <property type="evidence" value="ECO:0000315"/>
    <property type="project" value="UniProtKB"/>
</dbReference>
<dbReference type="GO" id="GO:0001701">
    <property type="term" value="P:in utero embryonic development"/>
    <property type="evidence" value="ECO:0000315"/>
    <property type="project" value="MGI"/>
</dbReference>
<dbReference type="GO" id="GO:1904878">
    <property type="term" value="P:negative regulation of calcium ion transmembrane transport via high voltage-gated calcium channel"/>
    <property type="evidence" value="ECO:0007669"/>
    <property type="project" value="Ensembl"/>
</dbReference>
<dbReference type="GO" id="GO:0042048">
    <property type="term" value="P:olfactory behavior"/>
    <property type="evidence" value="ECO:0000315"/>
    <property type="project" value="MGI"/>
</dbReference>
<dbReference type="GO" id="GO:0045732">
    <property type="term" value="P:positive regulation of protein catabolic process"/>
    <property type="evidence" value="ECO:0007669"/>
    <property type="project" value="Ensembl"/>
</dbReference>
<dbReference type="GO" id="GO:0016567">
    <property type="term" value="P:protein ubiquitination"/>
    <property type="evidence" value="ECO:0007669"/>
    <property type="project" value="UniProtKB-UniPathway"/>
</dbReference>
<dbReference type="GO" id="GO:0007608">
    <property type="term" value="P:sensory perception of smell"/>
    <property type="evidence" value="ECO:0000315"/>
    <property type="project" value="UniProtKB"/>
</dbReference>
<dbReference type="GO" id="GO:0001967">
    <property type="term" value="P:suckling behavior"/>
    <property type="evidence" value="ECO:0000315"/>
    <property type="project" value="UniProtKB"/>
</dbReference>
<dbReference type="GO" id="GO:0006511">
    <property type="term" value="P:ubiquitin-dependent protein catabolic process"/>
    <property type="evidence" value="ECO:0000314"/>
    <property type="project" value="UniProtKB"/>
</dbReference>
<dbReference type="GO" id="GO:0071596">
    <property type="term" value="P:ubiquitin-dependent protein catabolic process via the N-end rule pathway"/>
    <property type="evidence" value="ECO:0007669"/>
    <property type="project" value="InterPro"/>
</dbReference>
<dbReference type="CDD" id="cd16483">
    <property type="entry name" value="RING-H2_UBR3"/>
    <property type="match status" value="1"/>
</dbReference>
<dbReference type="CDD" id="cd19673">
    <property type="entry name" value="UBR-box_UBR3"/>
    <property type="match status" value="1"/>
</dbReference>
<dbReference type="FunFam" id="2.10.110.30:FF:000002">
    <property type="entry name" value="Putative e3 ubiquitin-protein ligase ubr3"/>
    <property type="match status" value="1"/>
</dbReference>
<dbReference type="Gene3D" id="2.10.110.30">
    <property type="match status" value="1"/>
</dbReference>
<dbReference type="InterPro" id="IPR044046">
    <property type="entry name" value="E3_ligase_UBR-like_C"/>
</dbReference>
<dbReference type="InterPro" id="IPR039164">
    <property type="entry name" value="UBR1-like"/>
</dbReference>
<dbReference type="InterPro" id="IPR055194">
    <property type="entry name" value="UBR1-like_winged-helix"/>
</dbReference>
<dbReference type="InterPro" id="IPR003126">
    <property type="entry name" value="Znf_UBR"/>
</dbReference>
<dbReference type="PANTHER" id="PTHR21497:SF39">
    <property type="entry name" value="E3 UBIQUITIN-PROTEIN LIGASE UBR3"/>
    <property type="match status" value="1"/>
</dbReference>
<dbReference type="PANTHER" id="PTHR21497">
    <property type="entry name" value="UBIQUITIN LIGASE E3 ALPHA-RELATED"/>
    <property type="match status" value="1"/>
</dbReference>
<dbReference type="Pfam" id="PF18995">
    <property type="entry name" value="PRT6_C"/>
    <property type="match status" value="1"/>
</dbReference>
<dbReference type="Pfam" id="PF22960">
    <property type="entry name" value="UBR1-like_wing"/>
    <property type="match status" value="1"/>
</dbReference>
<dbReference type="Pfam" id="PF02207">
    <property type="entry name" value="zf-UBR"/>
    <property type="match status" value="1"/>
</dbReference>
<dbReference type="SMART" id="SM00396">
    <property type="entry name" value="ZnF_UBR1"/>
    <property type="match status" value="1"/>
</dbReference>
<dbReference type="PROSITE" id="PS51157">
    <property type="entry name" value="ZF_UBR"/>
    <property type="match status" value="1"/>
</dbReference>
<reference key="1">
    <citation type="journal article" date="2007" name="J. Biol. Chem.">
        <title>Biochemical and genetic studies of UBR3, a ubiquitin ligase with a function in olfactory and other sensory systems.</title>
        <authorList>
            <person name="Tasaki T."/>
            <person name="Sohr R."/>
            <person name="Xia Z."/>
            <person name="Hellweg R."/>
            <person name="Hortnagl H."/>
            <person name="Varshavsky A."/>
            <person name="Kwon Y.T."/>
        </authorList>
    </citation>
    <scope>NUCLEOTIDE SEQUENCE [MRNA] (ISOFORM 1)</scope>
    <scope>INTERACTION WITH UBE2A AND UBE2B</scope>
    <scope>TISSUE SPECIFICITY</scope>
    <scope>DISRUPTION PHENOTYPE</scope>
</reference>
<reference key="2">
    <citation type="journal article" date="2009" name="PLoS Biol.">
        <title>Lineage-specific biology revealed by a finished genome assembly of the mouse.</title>
        <authorList>
            <person name="Church D.M."/>
            <person name="Goodstadt L."/>
            <person name="Hillier L.W."/>
            <person name="Zody M.C."/>
            <person name="Goldstein S."/>
            <person name="She X."/>
            <person name="Bult C.J."/>
            <person name="Agarwala R."/>
            <person name="Cherry J.L."/>
            <person name="DiCuccio M."/>
            <person name="Hlavina W."/>
            <person name="Kapustin Y."/>
            <person name="Meric P."/>
            <person name="Maglott D."/>
            <person name="Birtle Z."/>
            <person name="Marques A.C."/>
            <person name="Graves T."/>
            <person name="Zhou S."/>
            <person name="Teague B."/>
            <person name="Potamousis K."/>
            <person name="Churas C."/>
            <person name="Place M."/>
            <person name="Herschleb J."/>
            <person name="Runnheim R."/>
            <person name="Forrest D."/>
            <person name="Amos-Landgraf J."/>
            <person name="Schwartz D.C."/>
            <person name="Cheng Z."/>
            <person name="Lindblad-Toh K."/>
            <person name="Eichler E.E."/>
            <person name="Ponting C.P."/>
        </authorList>
    </citation>
    <scope>NUCLEOTIDE SEQUENCE [LARGE SCALE GENOMIC DNA]</scope>
    <source>
        <strain>C57BL/6J</strain>
    </source>
</reference>
<reference key="3">
    <citation type="journal article" date="2004" name="Genome Res.">
        <title>The status, quality, and expansion of the NIH full-length cDNA project: the Mammalian Gene Collection (MGC).</title>
        <authorList>
            <consortium name="The MGC Project Team"/>
        </authorList>
    </citation>
    <scope>NUCLEOTIDE SEQUENCE [LARGE SCALE MRNA] (ISOFORM 2)</scope>
    <source>
        <strain>C3H/He</strain>
        <tissue>Mesenchymal stem cell</tissue>
    </source>
</reference>
<reference key="4">
    <citation type="journal article" date="2004" name="DNA Res.">
        <title>Prediction of the coding sequences of mouse homologues of KIAA gene: IV. The complete nucleotide sequences of 500 mouse KIAA-homologous cDNAs identified by screening of terminal sequences of cDNA clones randomly sampled from size-fractionated libraries.</title>
        <authorList>
            <person name="Okazaki N."/>
            <person name="Kikuno R."/>
            <person name="Ohara R."/>
            <person name="Inamoto S."/>
            <person name="Koseki H."/>
            <person name="Hiraoka S."/>
            <person name="Saga Y."/>
            <person name="Seino S."/>
            <person name="Nishimura M."/>
            <person name="Kaisho T."/>
            <person name="Hoshino K."/>
            <person name="Kitamura H."/>
            <person name="Nagase T."/>
            <person name="Ohara O."/>
            <person name="Koga H."/>
        </authorList>
    </citation>
    <scope>NUCLEOTIDE SEQUENCE [LARGE SCALE MRNA] OF 1503-1889 (ISOFORM 3)</scope>
    <source>
        <tissue>Brain</tissue>
    </source>
</reference>
<reference key="5">
    <citation type="journal article" date="2010" name="Cell">
        <title>A tissue-specific atlas of mouse protein phosphorylation and expression.</title>
        <authorList>
            <person name="Huttlin E.L."/>
            <person name="Jedrychowski M.P."/>
            <person name="Elias J.E."/>
            <person name="Goswami T."/>
            <person name="Rad R."/>
            <person name="Beausoleil S.A."/>
            <person name="Villen J."/>
            <person name="Haas W."/>
            <person name="Sowa M.E."/>
            <person name="Gygi S.P."/>
        </authorList>
    </citation>
    <scope>PHOSPHORYLATION [LARGE SCALE ANALYSIS] AT SER-343; SER-344 AND SER-1199</scope>
    <scope>IDENTIFICATION BY MASS SPECTROMETRY [LARGE SCALE ANALYSIS]</scope>
    <source>
        <tissue>Brain</tissue>
        <tissue>Heart</tissue>
        <tissue>Kidney</tissue>
        <tissue>Lung</tissue>
        <tissue>Pancreas</tissue>
        <tissue>Spleen</tissue>
        <tissue>Testis</tissue>
    </source>
</reference>
<reference key="6">
    <citation type="journal article" date="2016" name="Elife">
        <title>The E3 ligase Ubr3 regulates Usher syndrome and MYH9 disorder proteins in the auditory organs of Drosophila and mammals.</title>
        <authorList>
            <person name="Li T."/>
            <person name="Giagtzoglou N."/>
            <person name="Eberl D.F."/>
            <person name="Jaiswal S.N."/>
            <person name="Cai T."/>
            <person name="Godt D."/>
            <person name="Groves A.K."/>
            <person name="Bellen H.J."/>
        </authorList>
    </citation>
    <scope>FUNCTION</scope>
</reference>
<reference key="7">
    <citation type="journal article" date="2016" name="PLoS Genet.">
        <title>Ubr3, a Novel Modulator of Hh Signaling Affects the Degradation of Costal-2 and Kif7 through Poly-ubiquitination.</title>
        <authorList>
            <person name="Li T."/>
            <person name="Fan J."/>
            <person name="Blanco-Sanchez B."/>
            <person name="Giagtzoglou N."/>
            <person name="Lin G."/>
            <person name="Yamamoto S."/>
            <person name="Jaiswal M."/>
            <person name="Chen K."/>
            <person name="Zhang J."/>
            <person name="Wei W."/>
            <person name="Lewis M.T."/>
            <person name="Groves A.K."/>
            <person name="Westerfield M."/>
            <person name="Jia J."/>
            <person name="Bellen H.J."/>
        </authorList>
    </citation>
    <scope>FUNCTION</scope>
</reference>
<gene>
    <name type="primary">Ubr3</name>
    <name type="synonym">Kiaa2024</name>
    <name type="synonym">Zfp650</name>
    <name type="synonym">Znf650</name>
</gene>
<organism>
    <name type="scientific">Mus musculus</name>
    <name type="common">Mouse</name>
    <dbReference type="NCBI Taxonomy" id="10090"/>
    <lineage>
        <taxon>Eukaryota</taxon>
        <taxon>Metazoa</taxon>
        <taxon>Chordata</taxon>
        <taxon>Craniata</taxon>
        <taxon>Vertebrata</taxon>
        <taxon>Euteleostomi</taxon>
        <taxon>Mammalia</taxon>
        <taxon>Eutheria</taxon>
        <taxon>Euarchontoglires</taxon>
        <taxon>Glires</taxon>
        <taxon>Rodentia</taxon>
        <taxon>Myomorpha</taxon>
        <taxon>Muroidea</taxon>
        <taxon>Muridae</taxon>
        <taxon>Murinae</taxon>
        <taxon>Mus</taxon>
        <taxon>Mus</taxon>
    </lineage>
</organism>
<protein>
    <recommendedName>
        <fullName>E3 ubiquitin-protein ligase UBR3</fullName>
        <ecNumber>2.3.2.27</ecNumber>
    </recommendedName>
    <alternativeName>
        <fullName>N-recognin-3</fullName>
    </alternativeName>
    <alternativeName>
        <fullName>RING-type E3 ubiquitin transferase UBR3</fullName>
    </alternativeName>
    <alternativeName>
        <fullName>Ubiquitin-protein ligase E3-alpha-3</fullName>
    </alternativeName>
    <alternativeName>
        <fullName>Ubiquitin-protein ligase E3-alpha-III</fullName>
    </alternativeName>
    <alternativeName>
        <fullName>Zinc finger protein 650</fullName>
    </alternativeName>
</protein>